<accession>P84765</accession>
<accession>Q9S7Q0</accession>
<sequence length="21" mass="2043">ATGSGGMNLVFVGAEMAPXXX</sequence>
<keyword id="KW-0035">Amyloplast</keyword>
<keyword id="KW-0150">Chloroplast</keyword>
<keyword id="KW-0903">Direct protein sequencing</keyword>
<keyword id="KW-0328">Glycosyltransferase</keyword>
<keyword id="KW-0934">Plastid</keyword>
<keyword id="KW-0750">Starch biosynthesis</keyword>
<keyword id="KW-0808">Transferase</keyword>
<organism>
    <name type="scientific">Secale cereale</name>
    <name type="common">Rye</name>
    <dbReference type="NCBI Taxonomy" id="4550"/>
    <lineage>
        <taxon>Eukaryota</taxon>
        <taxon>Viridiplantae</taxon>
        <taxon>Streptophyta</taxon>
        <taxon>Embryophyta</taxon>
        <taxon>Tracheophyta</taxon>
        <taxon>Spermatophyta</taxon>
        <taxon>Magnoliopsida</taxon>
        <taxon>Liliopsida</taxon>
        <taxon>Poales</taxon>
        <taxon>Poaceae</taxon>
        <taxon>BOP clade</taxon>
        <taxon>Pooideae</taxon>
        <taxon>Triticodae</taxon>
        <taxon>Triticeae</taxon>
        <taxon>Hordeinae</taxon>
        <taxon>Secale</taxon>
    </lineage>
</organism>
<comment type="catalytic activity">
    <reaction evidence="2">
        <text>an NDP-alpha-D-glucose + [(1-&gt;4)-alpha-D-glucosyl](n) = [(1-&gt;4)-alpha-D-glucosyl](n+1) + a ribonucleoside 5'-diphosphate + H(+)</text>
        <dbReference type="Rhea" id="RHEA:15873"/>
        <dbReference type="Rhea" id="RHEA-COMP:9584"/>
        <dbReference type="Rhea" id="RHEA-COMP:9587"/>
        <dbReference type="ChEBI" id="CHEBI:15378"/>
        <dbReference type="ChEBI" id="CHEBI:15444"/>
        <dbReference type="ChEBI" id="CHEBI:57930"/>
        <dbReference type="ChEBI" id="CHEBI:76533"/>
        <dbReference type="EC" id="2.4.1.242"/>
    </reaction>
</comment>
<comment type="pathway">
    <text>Glycan biosynthesis; starch biosynthesis.</text>
</comment>
<comment type="subcellular location">
    <subcellularLocation>
        <location evidence="1">Plastid</location>
        <location evidence="1">Chloroplast</location>
    </subcellularLocation>
    <subcellularLocation>
        <location evidence="1">Plastid</location>
        <location evidence="1">Amyloplast</location>
    </subcellularLocation>
    <text evidence="1">Amyloplast or chloroplast, granule-bound.</text>
</comment>
<comment type="similarity">
    <text evidence="3">Belongs to the glycosyltransferase 1 family. Bacterial/plant glycogen synthase subfamily.</text>
</comment>
<feature type="chain" id="PRO_0000223523" description="Granule-bound starch synthase 1" evidence="6">
    <location>
        <begin position="1"/>
        <end position="21" status="greater than"/>
    </location>
</feature>
<feature type="non-terminal residue" evidence="5">
    <location>
        <position position="21"/>
    </location>
</feature>
<evidence type="ECO:0000250" key="1"/>
<evidence type="ECO:0000250" key="2">
    <source>
        <dbReference type="UniProtKB" id="P27736"/>
    </source>
</evidence>
<evidence type="ECO:0000255" key="3"/>
<evidence type="ECO:0000269" key="4">
    <source>
    </source>
</evidence>
<evidence type="ECO:0000303" key="5">
    <source>
    </source>
</evidence>
<evidence type="ECO:0000305" key="6"/>
<dbReference type="EC" id="2.4.1.242"/>
<dbReference type="UniPathway" id="UPA00152"/>
<dbReference type="GO" id="GO:0009501">
    <property type="term" value="C:amyloplast"/>
    <property type="evidence" value="ECO:0007669"/>
    <property type="project" value="UniProtKB-SubCell"/>
</dbReference>
<dbReference type="GO" id="GO:0009507">
    <property type="term" value="C:chloroplast"/>
    <property type="evidence" value="ECO:0007669"/>
    <property type="project" value="UniProtKB-SubCell"/>
</dbReference>
<dbReference type="GO" id="GO:0033840">
    <property type="term" value="F:alpha-1,4-glucan glucosyltransferase (NDP-glucose donor) activity"/>
    <property type="evidence" value="ECO:0007669"/>
    <property type="project" value="UniProtKB-EC"/>
</dbReference>
<dbReference type="GO" id="GO:0019252">
    <property type="term" value="P:starch biosynthetic process"/>
    <property type="evidence" value="ECO:0007669"/>
    <property type="project" value="UniProtKB-UniPathway"/>
</dbReference>
<name>SSG1_SECCE</name>
<protein>
    <recommendedName>
        <fullName>Granule-bound starch synthase 1</fullName>
        <ecNumber>2.4.1.242</ecNumber>
    </recommendedName>
    <alternativeName>
        <fullName>Granule-bound starch synthase I</fullName>
        <shortName>GBSS-I</shortName>
    </alternativeName>
</protein>
<reference evidence="6" key="1">
    <citation type="journal article" date="1995" name="Biochem. Genet.">
        <title>Variation in the primary structure of waxy proteins (granule-bound starch synthase) in diploid cereals.</title>
        <authorList>
            <person name="Taira T."/>
            <person name="Fujita N."/>
            <person name="Takaoka K."/>
            <person name="Uematsu M."/>
            <person name="Wadano A."/>
            <person name="Kozaki S."/>
            <person name="Okabe S."/>
        </authorList>
    </citation>
    <scope>PROTEIN SEQUENCE</scope>
    <source>
        <strain evidence="4">cv. Prolific</strain>
    </source>
</reference>
<proteinExistence type="evidence at protein level"/>